<dbReference type="EC" id="4.-.-.-" evidence="1"/>
<dbReference type="EMBL" id="M95288">
    <property type="protein sequence ID" value="AAA27347.1"/>
    <property type="molecule type" value="Genomic_DNA"/>
</dbReference>
<dbReference type="PIR" id="S31069">
    <property type="entry name" value="S31069"/>
</dbReference>
<dbReference type="RefSeq" id="WP_048347951.1">
    <property type="nucleotide sequence ID" value="NZ_CP011941.1"/>
</dbReference>
<dbReference type="SMR" id="Q02187"/>
<dbReference type="STRING" id="32052.WB44_13620"/>
<dbReference type="OrthoDB" id="509174at2"/>
<dbReference type="GO" id="GO:0016829">
    <property type="term" value="F:lyase activity"/>
    <property type="evidence" value="ECO:0007669"/>
    <property type="project" value="UniProtKB-KW"/>
</dbReference>
<dbReference type="CDD" id="cd16338">
    <property type="entry name" value="CpcT"/>
    <property type="match status" value="1"/>
</dbReference>
<dbReference type="Gene3D" id="2.40.128.590">
    <property type="entry name" value="CpcT/CpeT domain"/>
    <property type="match status" value="1"/>
</dbReference>
<dbReference type="HAMAP" id="MF_01460">
    <property type="entry name" value="Chrphore_lyase_CpxT"/>
    <property type="match status" value="1"/>
</dbReference>
<dbReference type="InterPro" id="IPR010404">
    <property type="entry name" value="CpcT/CpeT"/>
</dbReference>
<dbReference type="InterPro" id="IPR038672">
    <property type="entry name" value="CpcT/CpeT_sf"/>
</dbReference>
<dbReference type="PANTHER" id="PTHR35137">
    <property type="entry name" value="CHROMOPHORE LYASE CRL, CHLOROPLASTIC"/>
    <property type="match status" value="1"/>
</dbReference>
<dbReference type="PANTHER" id="PTHR35137:SF1">
    <property type="entry name" value="CHROMOPHORE LYASE CRL, CHLOROPLASTIC"/>
    <property type="match status" value="1"/>
</dbReference>
<dbReference type="Pfam" id="PF06206">
    <property type="entry name" value="CpeT"/>
    <property type="match status" value="1"/>
</dbReference>
<organism>
    <name type="scientific">Synechococcus sp. (strain WH8020)</name>
    <dbReference type="NCBI Taxonomy" id="32052"/>
    <lineage>
        <taxon>Bacteria</taxon>
        <taxon>Bacillati</taxon>
        <taxon>Cyanobacteriota</taxon>
        <taxon>Cyanophyceae</taxon>
        <taxon>Synechococcales</taxon>
        <taxon>Synechococcaceae</taxon>
        <taxon>Synechococcus</taxon>
    </lineage>
</organism>
<name>CPXT_SYNPY</name>
<sequence length="196" mass="22984">MTATIGHFLQNLCGEYSNQKQAFENPPLFAHIFLRYKPIEHLQPGSILLEQTYAVDPKHPYRLRVIRAEELTSGIIKLWNHTFKEPDRFSSATFDQDCREKIREEDLILLDHCHYQVRQLDDGFHGELEPGCRCIVRRDGKETYLVSSFHLQGDELSTLDRGHDPQTHDRCWGSIAGKFHFQRISHWAENIPETWL</sequence>
<accession>Q02187</accession>
<gene>
    <name evidence="1" type="primary">cpcT</name>
</gene>
<evidence type="ECO:0000255" key="1">
    <source>
        <dbReference type="HAMAP-Rule" id="MF_01460"/>
    </source>
</evidence>
<protein>
    <recommendedName>
        <fullName evidence="1">Chromophore lyase CpcT/CpeT</fullName>
        <ecNumber evidence="1">4.-.-.-</ecNumber>
    </recommendedName>
</protein>
<proteinExistence type="inferred from homology"/>
<feature type="chain" id="PRO_0000199297" description="Chromophore lyase CpcT/CpeT">
    <location>
        <begin position="1"/>
        <end position="196"/>
    </location>
</feature>
<comment type="function">
    <text evidence="1">Covalently attaches a chromophore to Cys residue(s) of phycobiliproteins.</text>
</comment>
<comment type="similarity">
    <text evidence="1">Belongs to the CpcT/CpeT biliprotein lyase family.</text>
</comment>
<reference key="1">
    <citation type="journal article" date="1993" name="Plant Mol. Biol.">
        <title>Genes of the R-phycocyanin II locus of marine Synechococcus spp., and comparison of protein-chromophore interactions in phycocyanins differing in bilin composition.</title>
        <authorList>
            <person name="de Lorimier R."/>
            <person name="Wilbanks S.M."/>
            <person name="Glazer A.N."/>
        </authorList>
    </citation>
    <scope>NUCLEOTIDE SEQUENCE [GENOMIC DNA]</scope>
</reference>
<keyword id="KW-0456">Lyase</keyword>